<proteinExistence type="inferred from homology"/>
<gene>
    <name evidence="1" type="primary">mzrA</name>
    <name type="ordered locus">Dda3937_02735</name>
</gene>
<dbReference type="EMBL" id="CP002038">
    <property type="protein sequence ID" value="ADM96793.1"/>
    <property type="molecule type" value="Genomic_DNA"/>
</dbReference>
<dbReference type="SMR" id="E0SKT0"/>
<dbReference type="STRING" id="198628.Dda3937_02735"/>
<dbReference type="KEGG" id="ddd:Dda3937_02735"/>
<dbReference type="eggNOG" id="ENOG50333DY">
    <property type="taxonomic scope" value="Bacteria"/>
</dbReference>
<dbReference type="HOGENOM" id="CLU_153761_1_0_6"/>
<dbReference type="Proteomes" id="UP000006859">
    <property type="component" value="Chromosome"/>
</dbReference>
<dbReference type="GO" id="GO:0005886">
    <property type="term" value="C:plasma membrane"/>
    <property type="evidence" value="ECO:0007669"/>
    <property type="project" value="UniProtKB-SubCell"/>
</dbReference>
<dbReference type="GO" id="GO:0019901">
    <property type="term" value="F:protein kinase binding"/>
    <property type="evidence" value="ECO:0007669"/>
    <property type="project" value="UniProtKB-UniRule"/>
</dbReference>
<dbReference type="Gene3D" id="3.30.70.260">
    <property type="match status" value="1"/>
</dbReference>
<dbReference type="HAMAP" id="MF_00904">
    <property type="entry name" value="Modulator_MzrA"/>
    <property type="match status" value="1"/>
</dbReference>
<dbReference type="InterPro" id="IPR026574">
    <property type="entry name" value="Modulator_MzrA"/>
</dbReference>
<dbReference type="InterPro" id="IPR027398">
    <property type="entry name" value="SecD-TM"/>
</dbReference>
<dbReference type="NCBIfam" id="NF007915">
    <property type="entry name" value="PRK10629.1"/>
    <property type="match status" value="1"/>
</dbReference>
<dbReference type="Pfam" id="PF13721">
    <property type="entry name" value="SecD-TM1"/>
    <property type="match status" value="1"/>
</dbReference>
<accession>E0SKT0</accession>
<evidence type="ECO:0000255" key="1">
    <source>
        <dbReference type="HAMAP-Rule" id="MF_00904"/>
    </source>
</evidence>
<protein>
    <recommendedName>
        <fullName evidence="1">Modulator protein MzrA</fullName>
    </recommendedName>
</protein>
<organism>
    <name type="scientific">Dickeya dadantii (strain 3937)</name>
    <name type="common">Erwinia chrysanthemi (strain 3937)</name>
    <dbReference type="NCBI Taxonomy" id="198628"/>
    <lineage>
        <taxon>Bacteria</taxon>
        <taxon>Pseudomonadati</taxon>
        <taxon>Pseudomonadota</taxon>
        <taxon>Gammaproteobacteria</taxon>
        <taxon>Enterobacterales</taxon>
        <taxon>Pectobacteriaceae</taxon>
        <taxon>Dickeya</taxon>
    </lineage>
</organism>
<comment type="function">
    <text evidence="1">Modulates the activity of the EnvZ/OmpR two-component regulatory system, probably by directly modulating EnvZ enzymatic activity and increasing stability of phosphorylated OmpR.</text>
</comment>
<comment type="subunit">
    <text evidence="1">Interacts with EnvZ.</text>
</comment>
<comment type="subcellular location">
    <subcellularLocation>
        <location evidence="1">Cell inner membrane</location>
        <topology evidence="1">Single-pass membrane protein</topology>
    </subcellularLocation>
</comment>
<comment type="similarity">
    <text evidence="1">Belongs to the MzrA family.</text>
</comment>
<sequence length="117" mass="13091">MMTNRRFRKPSAWRLLLLLLPLVVLLSMSSRRLPDEVMLHITPLHQGAPLPDGFYIYQRLNERGIAIKSITPENDSIIVRLSSPEQSGAAREILSTALPYAIVIAQRSNGTSPVTRS</sequence>
<feature type="chain" id="PRO_0000413178" description="Modulator protein MzrA">
    <location>
        <begin position="1"/>
        <end position="117"/>
    </location>
</feature>
<feature type="topological domain" description="Cytoplasmic" evidence="1">
    <location>
        <begin position="1"/>
        <end position="11"/>
    </location>
</feature>
<feature type="transmembrane region" description="Helical" evidence="1">
    <location>
        <begin position="12"/>
        <end position="29"/>
    </location>
</feature>
<feature type="topological domain" description="Periplasmic" evidence="1">
    <location>
        <begin position="30"/>
        <end position="117"/>
    </location>
</feature>
<keyword id="KW-0997">Cell inner membrane</keyword>
<keyword id="KW-1003">Cell membrane</keyword>
<keyword id="KW-0472">Membrane</keyword>
<keyword id="KW-1185">Reference proteome</keyword>
<keyword id="KW-0812">Transmembrane</keyword>
<keyword id="KW-1133">Transmembrane helix</keyword>
<reference key="1">
    <citation type="journal article" date="2011" name="J. Bacteriol.">
        <title>Genome sequence of the plant-pathogenic bacterium Dickeya dadantii 3937.</title>
        <authorList>
            <person name="Glasner J.D."/>
            <person name="Yang C.H."/>
            <person name="Reverchon S."/>
            <person name="Hugouvieux-Cotte-Pattat N."/>
            <person name="Condemine G."/>
            <person name="Bohin J.P."/>
            <person name="Van Gijsegem F."/>
            <person name="Yang S."/>
            <person name="Franza T."/>
            <person name="Expert D."/>
            <person name="Plunkett G. III"/>
            <person name="San Francisco M.J."/>
            <person name="Charkowski A.O."/>
            <person name="Py B."/>
            <person name="Bell K."/>
            <person name="Rauscher L."/>
            <person name="Rodriguez-Palenzuela P."/>
            <person name="Toussaint A."/>
            <person name="Holeva M.C."/>
            <person name="He S.Y."/>
            <person name="Douet V."/>
            <person name="Boccara M."/>
            <person name="Blanco C."/>
            <person name="Toth I."/>
            <person name="Anderson B.D."/>
            <person name="Biehl B.S."/>
            <person name="Mau B."/>
            <person name="Flynn S.M."/>
            <person name="Barras F."/>
            <person name="Lindeberg M."/>
            <person name="Birch P.R."/>
            <person name="Tsuyumu S."/>
            <person name="Shi X."/>
            <person name="Hibbing M."/>
            <person name="Yap M.N."/>
            <person name="Carpentier M."/>
            <person name="Dassa E."/>
            <person name="Umehara M."/>
            <person name="Kim J.F."/>
            <person name="Rusch M."/>
            <person name="Soni P."/>
            <person name="Mayhew G.F."/>
            <person name="Fouts D.E."/>
            <person name="Gill S.R."/>
            <person name="Blattner F.R."/>
            <person name="Keen N.T."/>
            <person name="Perna N.T."/>
        </authorList>
    </citation>
    <scope>NUCLEOTIDE SEQUENCE [LARGE SCALE GENOMIC DNA]</scope>
    <source>
        <strain>3937</strain>
    </source>
</reference>
<name>MZRA_DICD3</name>